<evidence type="ECO:0000255" key="1">
    <source>
        <dbReference type="HAMAP-Rule" id="MF_01320"/>
    </source>
</evidence>
<evidence type="ECO:0000256" key="2">
    <source>
        <dbReference type="SAM" id="MobiDB-lite"/>
    </source>
</evidence>
<evidence type="ECO:0000305" key="3"/>
<name>RL2_CHLT2</name>
<organism>
    <name type="scientific">Chlamydia trachomatis serovar L2 (strain ATCC VR-902B / DSM 19102 / 434/Bu)</name>
    <dbReference type="NCBI Taxonomy" id="471472"/>
    <lineage>
        <taxon>Bacteria</taxon>
        <taxon>Pseudomonadati</taxon>
        <taxon>Chlamydiota</taxon>
        <taxon>Chlamydiia</taxon>
        <taxon>Chlamydiales</taxon>
        <taxon>Chlamydiaceae</taxon>
        <taxon>Chlamydia/Chlamydophila group</taxon>
        <taxon>Chlamydia</taxon>
    </lineage>
</organism>
<protein>
    <recommendedName>
        <fullName evidence="1">Large ribosomal subunit protein uL2</fullName>
    </recommendedName>
    <alternativeName>
        <fullName evidence="3">50S ribosomal protein L2</fullName>
    </alternativeName>
</protein>
<dbReference type="EMBL" id="AM884176">
    <property type="protein sequence ID" value="CAP04225.1"/>
    <property type="molecule type" value="Genomic_DNA"/>
</dbReference>
<dbReference type="RefSeq" id="WP_009871889.1">
    <property type="nucleotide sequence ID" value="NC_010287.1"/>
</dbReference>
<dbReference type="RefSeq" id="YP_001654858.1">
    <property type="nucleotide sequence ID" value="NC_010287.1"/>
</dbReference>
<dbReference type="SMR" id="B0B899"/>
<dbReference type="KEGG" id="ctb:CTL0787"/>
<dbReference type="PATRIC" id="fig|471472.4.peg.843"/>
<dbReference type="HOGENOM" id="CLU_036235_2_1_0"/>
<dbReference type="Proteomes" id="UP001154402">
    <property type="component" value="Chromosome"/>
</dbReference>
<dbReference type="GO" id="GO:0015934">
    <property type="term" value="C:large ribosomal subunit"/>
    <property type="evidence" value="ECO:0007669"/>
    <property type="project" value="InterPro"/>
</dbReference>
<dbReference type="GO" id="GO:0019843">
    <property type="term" value="F:rRNA binding"/>
    <property type="evidence" value="ECO:0007669"/>
    <property type="project" value="UniProtKB-UniRule"/>
</dbReference>
<dbReference type="GO" id="GO:0003735">
    <property type="term" value="F:structural constituent of ribosome"/>
    <property type="evidence" value="ECO:0007669"/>
    <property type="project" value="InterPro"/>
</dbReference>
<dbReference type="GO" id="GO:0016740">
    <property type="term" value="F:transferase activity"/>
    <property type="evidence" value="ECO:0007669"/>
    <property type="project" value="InterPro"/>
</dbReference>
<dbReference type="GO" id="GO:0002181">
    <property type="term" value="P:cytoplasmic translation"/>
    <property type="evidence" value="ECO:0007669"/>
    <property type="project" value="TreeGrafter"/>
</dbReference>
<dbReference type="FunFam" id="2.30.30.30:FF:000001">
    <property type="entry name" value="50S ribosomal protein L2"/>
    <property type="match status" value="1"/>
</dbReference>
<dbReference type="FunFam" id="2.40.50.140:FF:000003">
    <property type="entry name" value="50S ribosomal protein L2"/>
    <property type="match status" value="1"/>
</dbReference>
<dbReference type="FunFam" id="4.10.950.10:FF:000001">
    <property type="entry name" value="50S ribosomal protein L2"/>
    <property type="match status" value="1"/>
</dbReference>
<dbReference type="Gene3D" id="2.30.30.30">
    <property type="match status" value="1"/>
</dbReference>
<dbReference type="Gene3D" id="2.40.50.140">
    <property type="entry name" value="Nucleic acid-binding proteins"/>
    <property type="match status" value="1"/>
</dbReference>
<dbReference type="Gene3D" id="4.10.950.10">
    <property type="entry name" value="Ribosomal protein L2, domain 3"/>
    <property type="match status" value="1"/>
</dbReference>
<dbReference type="HAMAP" id="MF_01320_B">
    <property type="entry name" value="Ribosomal_uL2_B"/>
    <property type="match status" value="1"/>
</dbReference>
<dbReference type="InterPro" id="IPR012340">
    <property type="entry name" value="NA-bd_OB-fold"/>
</dbReference>
<dbReference type="InterPro" id="IPR014722">
    <property type="entry name" value="Rib_uL2_dom2"/>
</dbReference>
<dbReference type="InterPro" id="IPR002171">
    <property type="entry name" value="Ribosomal_uL2"/>
</dbReference>
<dbReference type="InterPro" id="IPR005880">
    <property type="entry name" value="Ribosomal_uL2_bac/org-type"/>
</dbReference>
<dbReference type="InterPro" id="IPR022669">
    <property type="entry name" value="Ribosomal_uL2_C"/>
</dbReference>
<dbReference type="InterPro" id="IPR022671">
    <property type="entry name" value="Ribosomal_uL2_CS"/>
</dbReference>
<dbReference type="InterPro" id="IPR014726">
    <property type="entry name" value="Ribosomal_uL2_dom3"/>
</dbReference>
<dbReference type="InterPro" id="IPR022666">
    <property type="entry name" value="Ribosomal_uL2_RNA-bd_dom"/>
</dbReference>
<dbReference type="InterPro" id="IPR008991">
    <property type="entry name" value="Translation_prot_SH3-like_sf"/>
</dbReference>
<dbReference type="NCBIfam" id="TIGR01171">
    <property type="entry name" value="rplB_bact"/>
    <property type="match status" value="1"/>
</dbReference>
<dbReference type="PANTHER" id="PTHR13691:SF5">
    <property type="entry name" value="LARGE RIBOSOMAL SUBUNIT PROTEIN UL2M"/>
    <property type="match status" value="1"/>
</dbReference>
<dbReference type="PANTHER" id="PTHR13691">
    <property type="entry name" value="RIBOSOMAL PROTEIN L2"/>
    <property type="match status" value="1"/>
</dbReference>
<dbReference type="Pfam" id="PF00181">
    <property type="entry name" value="Ribosomal_L2"/>
    <property type="match status" value="1"/>
</dbReference>
<dbReference type="Pfam" id="PF03947">
    <property type="entry name" value="Ribosomal_L2_C"/>
    <property type="match status" value="1"/>
</dbReference>
<dbReference type="PIRSF" id="PIRSF002158">
    <property type="entry name" value="Ribosomal_L2"/>
    <property type="match status" value="1"/>
</dbReference>
<dbReference type="SMART" id="SM01383">
    <property type="entry name" value="Ribosomal_L2"/>
    <property type="match status" value="1"/>
</dbReference>
<dbReference type="SMART" id="SM01382">
    <property type="entry name" value="Ribosomal_L2_C"/>
    <property type="match status" value="1"/>
</dbReference>
<dbReference type="SUPFAM" id="SSF50249">
    <property type="entry name" value="Nucleic acid-binding proteins"/>
    <property type="match status" value="1"/>
</dbReference>
<dbReference type="SUPFAM" id="SSF50104">
    <property type="entry name" value="Translation proteins SH3-like domain"/>
    <property type="match status" value="1"/>
</dbReference>
<dbReference type="PROSITE" id="PS00467">
    <property type="entry name" value="RIBOSOMAL_L2"/>
    <property type="match status" value="1"/>
</dbReference>
<gene>
    <name evidence="1" type="primary">rplB</name>
    <name type="ordered locus">CTL0787</name>
</gene>
<keyword id="KW-0687">Ribonucleoprotein</keyword>
<keyword id="KW-0689">Ribosomal protein</keyword>
<keyword id="KW-0694">RNA-binding</keyword>
<keyword id="KW-0699">rRNA-binding</keyword>
<sequence>MFKKFKPVTPGTRQLILPSFDELTTQGELKGSSSRRSVRPNKKLSFFKKSSGGRDNLGHISCRHRGGGVRRHYRVIDFKRNKDGIEAKVASVEYDPNRSAYIALLNYVDGEKRYILAPKGIKRGDRVISGEGSPFKTGCCMTLKSIPLGLSVHNVEMRPGSGGKLVRSAGLSAQIIAKTAGYVTLKMPSGEFRMLNEMCRATVGEVSNADHNLCVDGKAGRRRWKGIRPTVRGTAMNPVDHPHGGGEGRHNGYISQTPWGKVTKGLKTRDKRKSNKWIVKDRRK</sequence>
<feature type="chain" id="PRO_1000141524" description="Large ribosomal subunit protein uL2">
    <location>
        <begin position="1"/>
        <end position="284"/>
    </location>
</feature>
<feature type="region of interest" description="Disordered" evidence="2">
    <location>
        <begin position="28"/>
        <end position="50"/>
    </location>
</feature>
<feature type="region of interest" description="Disordered" evidence="2">
    <location>
        <begin position="232"/>
        <end position="284"/>
    </location>
</feature>
<feature type="compositionally biased region" description="Basic residues" evidence="2">
    <location>
        <begin position="36"/>
        <end position="46"/>
    </location>
</feature>
<feature type="compositionally biased region" description="Basic and acidic residues" evidence="2">
    <location>
        <begin position="240"/>
        <end position="250"/>
    </location>
</feature>
<feature type="compositionally biased region" description="Basic residues" evidence="2">
    <location>
        <begin position="264"/>
        <end position="284"/>
    </location>
</feature>
<proteinExistence type="inferred from homology"/>
<reference key="1">
    <citation type="journal article" date="2008" name="Genome Res.">
        <title>Chlamydia trachomatis: genome sequence analysis of lymphogranuloma venereum isolates.</title>
        <authorList>
            <person name="Thomson N.R."/>
            <person name="Holden M.T.G."/>
            <person name="Carder C."/>
            <person name="Lennard N."/>
            <person name="Lockey S.J."/>
            <person name="Marsh P."/>
            <person name="Skipp P."/>
            <person name="O'Connor C.D."/>
            <person name="Goodhead I."/>
            <person name="Norbertzcak H."/>
            <person name="Harris B."/>
            <person name="Ormond D."/>
            <person name="Rance R."/>
            <person name="Quail M.A."/>
            <person name="Parkhill J."/>
            <person name="Stephens R.S."/>
            <person name="Clarke I.N."/>
        </authorList>
    </citation>
    <scope>NUCLEOTIDE SEQUENCE [LARGE SCALE GENOMIC DNA]</scope>
    <source>
        <strain>ATCC VR-902B / DSM 19102 / 434/Bu</strain>
    </source>
</reference>
<comment type="function">
    <text evidence="1">One of the primary rRNA binding proteins. Required for association of the 30S and 50S subunits to form the 70S ribosome, for tRNA binding and peptide bond formation. It has been suggested to have peptidyltransferase activity; this is somewhat controversial. Makes several contacts with the 16S rRNA in the 70S ribosome.</text>
</comment>
<comment type="subunit">
    <text evidence="1">Part of the 50S ribosomal subunit. Forms a bridge to the 30S subunit in the 70S ribosome.</text>
</comment>
<comment type="similarity">
    <text evidence="1">Belongs to the universal ribosomal protein uL2 family.</text>
</comment>
<accession>B0B899</accession>